<feature type="chain" id="PRO_0000230682" description="Small ribosomal subunit protein uS3">
    <location>
        <begin position="1"/>
        <end position="236"/>
    </location>
</feature>
<feature type="domain" description="KH type-2" evidence="1">
    <location>
        <begin position="39"/>
        <end position="107"/>
    </location>
</feature>
<feature type="region of interest" description="Disordered" evidence="2">
    <location>
        <begin position="214"/>
        <end position="236"/>
    </location>
</feature>
<comment type="function">
    <text evidence="1">Binds the lower part of the 30S subunit head. Binds mRNA in the 70S ribosome, positioning it for translation.</text>
</comment>
<comment type="subunit">
    <text evidence="1">Part of the 30S ribosomal subunit. Forms a tight complex with proteins S10 and S14.</text>
</comment>
<comment type="similarity">
    <text evidence="1">Belongs to the universal ribosomal protein uS3 family.</text>
</comment>
<reference key="1">
    <citation type="journal article" date="2005" name="J. Bacteriol.">
        <title>Completion of the genome sequence of Brucella abortus and comparison to the highly similar genomes of Brucella melitensis and Brucella suis.</title>
        <authorList>
            <person name="Halling S.M."/>
            <person name="Peterson-Burch B.D."/>
            <person name="Bricker B.J."/>
            <person name="Zuerner R.L."/>
            <person name="Qing Z."/>
            <person name="Li L.-L."/>
            <person name="Kapur V."/>
            <person name="Alt D.P."/>
            <person name="Olsen S.C."/>
        </authorList>
    </citation>
    <scope>NUCLEOTIDE SEQUENCE [LARGE SCALE GENOMIC DNA]</scope>
    <source>
        <strain>9-941</strain>
    </source>
</reference>
<accession>Q57CR4</accession>
<dbReference type="EMBL" id="AE017223">
    <property type="protein sequence ID" value="AAX74570.1"/>
    <property type="molecule type" value="Genomic_DNA"/>
</dbReference>
<dbReference type="RefSeq" id="WP_002964356.1">
    <property type="nucleotide sequence ID" value="NC_006932.1"/>
</dbReference>
<dbReference type="SMR" id="Q57CR4"/>
<dbReference type="EnsemblBacteria" id="AAX74570">
    <property type="protein sequence ID" value="AAX74570"/>
    <property type="gene ID" value="BruAb1_1232"/>
</dbReference>
<dbReference type="GeneID" id="97533530"/>
<dbReference type="KEGG" id="bmb:BruAb1_1232"/>
<dbReference type="HOGENOM" id="CLU_058591_0_2_5"/>
<dbReference type="Proteomes" id="UP000000540">
    <property type="component" value="Chromosome I"/>
</dbReference>
<dbReference type="GO" id="GO:0022627">
    <property type="term" value="C:cytosolic small ribosomal subunit"/>
    <property type="evidence" value="ECO:0007669"/>
    <property type="project" value="TreeGrafter"/>
</dbReference>
<dbReference type="GO" id="GO:0003729">
    <property type="term" value="F:mRNA binding"/>
    <property type="evidence" value="ECO:0007669"/>
    <property type="project" value="UniProtKB-UniRule"/>
</dbReference>
<dbReference type="GO" id="GO:0019843">
    <property type="term" value="F:rRNA binding"/>
    <property type="evidence" value="ECO:0007669"/>
    <property type="project" value="UniProtKB-UniRule"/>
</dbReference>
<dbReference type="GO" id="GO:0003735">
    <property type="term" value="F:structural constituent of ribosome"/>
    <property type="evidence" value="ECO:0007669"/>
    <property type="project" value="InterPro"/>
</dbReference>
<dbReference type="GO" id="GO:0006412">
    <property type="term" value="P:translation"/>
    <property type="evidence" value="ECO:0007669"/>
    <property type="project" value="UniProtKB-UniRule"/>
</dbReference>
<dbReference type="CDD" id="cd02412">
    <property type="entry name" value="KH-II_30S_S3"/>
    <property type="match status" value="1"/>
</dbReference>
<dbReference type="FunFam" id="3.30.1140.32:FF:000009">
    <property type="entry name" value="30S ribosomal protein S3"/>
    <property type="match status" value="1"/>
</dbReference>
<dbReference type="FunFam" id="3.30.300.20:FF:000001">
    <property type="entry name" value="30S ribosomal protein S3"/>
    <property type="match status" value="1"/>
</dbReference>
<dbReference type="Gene3D" id="3.30.300.20">
    <property type="match status" value="1"/>
</dbReference>
<dbReference type="Gene3D" id="3.30.1140.32">
    <property type="entry name" value="Ribosomal protein S3, C-terminal domain"/>
    <property type="match status" value="1"/>
</dbReference>
<dbReference type="HAMAP" id="MF_01309_B">
    <property type="entry name" value="Ribosomal_uS3_B"/>
    <property type="match status" value="1"/>
</dbReference>
<dbReference type="InterPro" id="IPR004087">
    <property type="entry name" value="KH_dom"/>
</dbReference>
<dbReference type="InterPro" id="IPR015946">
    <property type="entry name" value="KH_dom-like_a/b"/>
</dbReference>
<dbReference type="InterPro" id="IPR004044">
    <property type="entry name" value="KH_dom_type_2"/>
</dbReference>
<dbReference type="InterPro" id="IPR009019">
    <property type="entry name" value="KH_sf_prok-type"/>
</dbReference>
<dbReference type="InterPro" id="IPR036419">
    <property type="entry name" value="Ribosomal_S3_C_sf"/>
</dbReference>
<dbReference type="InterPro" id="IPR005704">
    <property type="entry name" value="Ribosomal_uS3_bac-typ"/>
</dbReference>
<dbReference type="InterPro" id="IPR001351">
    <property type="entry name" value="Ribosomal_uS3_C"/>
</dbReference>
<dbReference type="InterPro" id="IPR018280">
    <property type="entry name" value="Ribosomal_uS3_CS"/>
</dbReference>
<dbReference type="NCBIfam" id="TIGR01009">
    <property type="entry name" value="rpsC_bact"/>
    <property type="match status" value="1"/>
</dbReference>
<dbReference type="PANTHER" id="PTHR11760">
    <property type="entry name" value="30S/40S RIBOSOMAL PROTEIN S3"/>
    <property type="match status" value="1"/>
</dbReference>
<dbReference type="PANTHER" id="PTHR11760:SF19">
    <property type="entry name" value="SMALL RIBOSOMAL SUBUNIT PROTEIN US3C"/>
    <property type="match status" value="1"/>
</dbReference>
<dbReference type="Pfam" id="PF07650">
    <property type="entry name" value="KH_2"/>
    <property type="match status" value="1"/>
</dbReference>
<dbReference type="Pfam" id="PF00189">
    <property type="entry name" value="Ribosomal_S3_C"/>
    <property type="match status" value="1"/>
</dbReference>
<dbReference type="SMART" id="SM00322">
    <property type="entry name" value="KH"/>
    <property type="match status" value="1"/>
</dbReference>
<dbReference type="SUPFAM" id="SSF54814">
    <property type="entry name" value="Prokaryotic type KH domain (KH-domain type II)"/>
    <property type="match status" value="1"/>
</dbReference>
<dbReference type="SUPFAM" id="SSF54821">
    <property type="entry name" value="Ribosomal protein S3 C-terminal domain"/>
    <property type="match status" value="1"/>
</dbReference>
<dbReference type="PROSITE" id="PS50823">
    <property type="entry name" value="KH_TYPE_2"/>
    <property type="match status" value="1"/>
</dbReference>
<dbReference type="PROSITE" id="PS00548">
    <property type="entry name" value="RIBOSOMAL_S3"/>
    <property type="match status" value="1"/>
</dbReference>
<evidence type="ECO:0000255" key="1">
    <source>
        <dbReference type="HAMAP-Rule" id="MF_01309"/>
    </source>
</evidence>
<evidence type="ECO:0000256" key="2">
    <source>
        <dbReference type="SAM" id="MobiDB-lite"/>
    </source>
</evidence>
<evidence type="ECO:0000305" key="3"/>
<gene>
    <name evidence="1" type="primary">rpsC</name>
    <name type="ordered locus">BruAb1_1232</name>
</gene>
<protein>
    <recommendedName>
        <fullName evidence="1">Small ribosomal subunit protein uS3</fullName>
    </recommendedName>
    <alternativeName>
        <fullName evidence="3">30S ribosomal protein S3</fullName>
    </alternativeName>
</protein>
<keyword id="KW-0687">Ribonucleoprotein</keyword>
<keyword id="KW-0689">Ribosomal protein</keyword>
<keyword id="KW-0694">RNA-binding</keyword>
<keyword id="KW-0699">rRNA-binding</keyword>
<sequence length="236" mass="26604">MGQKINPIGLRLGINRTWDSRWYANTGEYGKLLHEDVKIREFLTEELKQAAISKIVIERPHKKCRVTIHSARPGIIIGKKGADIEKLRKKLSEMTNADTSLNIVEVRKPEVDATLIAQSIAQQLERRVAFRRAMKRAVQSAMRLGAEGIRINCSGRLGGAEIARMEWYREGRVPLHTLRADIDYGTAEAKTAYGICGVKVWVFKGEILEHDPMASERRAVEGDNQGSSSNRRRENA</sequence>
<proteinExistence type="inferred from homology"/>
<name>RS3_BRUAB</name>
<organism>
    <name type="scientific">Brucella abortus biovar 1 (strain 9-941)</name>
    <dbReference type="NCBI Taxonomy" id="262698"/>
    <lineage>
        <taxon>Bacteria</taxon>
        <taxon>Pseudomonadati</taxon>
        <taxon>Pseudomonadota</taxon>
        <taxon>Alphaproteobacteria</taxon>
        <taxon>Hyphomicrobiales</taxon>
        <taxon>Brucellaceae</taxon>
        <taxon>Brucella/Ochrobactrum group</taxon>
        <taxon>Brucella</taxon>
    </lineage>
</organism>